<proteinExistence type="predicted"/>
<organismHost>
    <name type="scientific">Gallus gallus</name>
    <name type="common">Chicken</name>
    <dbReference type="NCBI Taxonomy" id="9031"/>
</organismHost>
<sequence length="128" mass="14157">MSIRRTFFSYKRETVQYPACPRQHQYIMIVNRVSISSCVRGARSIHRKARPTIFLVGSVGWNGEAEISYSLSVTVILSNISPHKRDDGGFPAFIAAWEIVAAVNMVLARLRTDLGNSATCSPPAESIS</sequence>
<name>US384_GAHVG</name>
<dbReference type="EMBL" id="M80595">
    <property type="protein sequence ID" value="AAB59892.1"/>
    <property type="molecule type" value="Genomic_DNA"/>
</dbReference>
<feature type="chain" id="PRO_0000116350" description="Uncharacterized 14.2 kDa protein">
    <location>
        <begin position="1"/>
        <end position="128"/>
    </location>
</feature>
<accession>Q05102</accession>
<protein>
    <recommendedName>
        <fullName>Uncharacterized 14.2 kDa protein</fullName>
    </recommendedName>
</protein>
<organism>
    <name type="scientific">Gallid herpesvirus 2 (strain GA)</name>
    <name type="common">GaHV-2</name>
    <name type="synonym">Marek's disease herpesvirus type 1</name>
    <dbReference type="NCBI Taxonomy" id="10388"/>
    <lineage>
        <taxon>Viruses</taxon>
        <taxon>Duplodnaviria</taxon>
        <taxon>Heunggongvirae</taxon>
        <taxon>Peploviricota</taxon>
        <taxon>Herviviricetes</taxon>
        <taxon>Herpesvirales</taxon>
        <taxon>Orthoherpesviridae</taxon>
        <taxon>Alphaherpesvirinae</taxon>
        <taxon>Mardivirus</taxon>
        <taxon>Mardivirus gallidalpha2</taxon>
        <taxon>Gallid alphaherpesvirus 2</taxon>
    </lineage>
</organism>
<reference key="1">
    <citation type="journal article" date="1992" name="Virus Genes">
        <title>Sequence determination and genetic content of an 8.9-kb restriction fragment in the short unique region and the internal inverted repeat of Marek's disease virus type 1 DNA.</title>
        <authorList>
            <person name="Sakaguchi M."/>
            <person name="Urakawa T."/>
            <person name="Hirayama Y."/>
            <person name="Miki N."/>
            <person name="Yamamoto M."/>
            <person name="Hirai K."/>
        </authorList>
    </citation>
    <scope>NUCLEOTIDE SEQUENCE [GENOMIC DNA]</scope>
</reference>
<gene>
    <name type="primary">US384</name>
</gene>